<accession>Q5LS91</accession>
<comment type="function">
    <text evidence="1">Heme chaperone required for the biogenesis of c-type cytochromes. Transiently binds heme delivered by CcmC and transfers the heme to apo-cytochromes in a process facilitated by CcmF and CcmH.</text>
</comment>
<comment type="subcellular location">
    <subcellularLocation>
        <location evidence="1">Cell inner membrane</location>
        <topology evidence="1">Single-pass type II membrane protein</topology>
        <orientation evidence="1">Periplasmic side</orientation>
    </subcellularLocation>
</comment>
<comment type="similarity">
    <text evidence="1">Belongs to the CcmE/CycJ family.</text>
</comment>
<evidence type="ECO:0000255" key="1">
    <source>
        <dbReference type="HAMAP-Rule" id="MF_01959"/>
    </source>
</evidence>
<reference key="1">
    <citation type="journal article" date="2004" name="Nature">
        <title>Genome sequence of Silicibacter pomeroyi reveals adaptations to the marine environment.</title>
        <authorList>
            <person name="Moran M.A."/>
            <person name="Buchan A."/>
            <person name="Gonzalez J.M."/>
            <person name="Heidelberg J.F."/>
            <person name="Whitman W.B."/>
            <person name="Kiene R.P."/>
            <person name="Henriksen J.R."/>
            <person name="King G.M."/>
            <person name="Belas R."/>
            <person name="Fuqua C."/>
            <person name="Brinkac L.M."/>
            <person name="Lewis M."/>
            <person name="Johri S."/>
            <person name="Weaver B."/>
            <person name="Pai G."/>
            <person name="Eisen J.A."/>
            <person name="Rahe E."/>
            <person name="Sheldon W.M."/>
            <person name="Ye W."/>
            <person name="Miller T.R."/>
            <person name="Carlton J."/>
            <person name="Rasko D.A."/>
            <person name="Paulsen I.T."/>
            <person name="Ren Q."/>
            <person name="Daugherty S.C."/>
            <person name="DeBoy R.T."/>
            <person name="Dodson R.J."/>
            <person name="Durkin A.S."/>
            <person name="Madupu R."/>
            <person name="Nelson W.C."/>
            <person name="Sullivan S.A."/>
            <person name="Rosovitz M.J."/>
            <person name="Haft D.H."/>
            <person name="Selengut J."/>
            <person name="Ward N."/>
        </authorList>
    </citation>
    <scope>NUCLEOTIDE SEQUENCE [LARGE SCALE GENOMIC DNA]</scope>
    <source>
        <strain>ATCC 700808 / DSM 15171 / DSS-3</strain>
    </source>
</reference>
<reference key="2">
    <citation type="journal article" date="2014" name="Stand. Genomic Sci.">
        <title>An updated genome annotation for the model marine bacterium Ruegeria pomeroyi DSS-3.</title>
        <authorList>
            <person name="Rivers A.R."/>
            <person name="Smith C.B."/>
            <person name="Moran M.A."/>
        </authorList>
    </citation>
    <scope>GENOME REANNOTATION</scope>
    <source>
        <strain>ATCC 700808 / DSM 15171 / DSS-3</strain>
    </source>
</reference>
<gene>
    <name evidence="1" type="primary">ccmE1</name>
    <name evidence="1" type="synonym">cycJ1</name>
    <name type="ordered locus">SPO1877</name>
</gene>
<protein>
    <recommendedName>
        <fullName evidence="1">Cytochrome c-type biogenesis protein CcmE 1</fullName>
    </recommendedName>
    <alternativeName>
        <fullName evidence="1">Cytochrome c maturation protein E 1</fullName>
    </alternativeName>
    <alternativeName>
        <fullName evidence="1">Heme chaperone CcmE 1</fullName>
    </alternativeName>
</protein>
<sequence>MKSLKKQRRIQVIILATVALVLATGLIGYAMRDGINFFRAPSDIIAEPPQPSETFRIGGLVEDGTLVRGQGETVRFSVTDGGASVPVVFTGVLPDLFAENQGMIGTGRYVNGVFEASEILAKHDETYMPKEVMDALKEQGVYQAPES</sequence>
<feature type="chain" id="PRO_0000238868" description="Cytochrome c-type biogenesis protein CcmE 1">
    <location>
        <begin position="1"/>
        <end position="147"/>
    </location>
</feature>
<feature type="topological domain" description="Cytoplasmic" evidence="1">
    <location>
        <begin position="1"/>
        <end position="9"/>
    </location>
</feature>
<feature type="transmembrane region" description="Helical; Signal-anchor for type II membrane protein" evidence="1">
    <location>
        <begin position="10"/>
        <end position="30"/>
    </location>
</feature>
<feature type="topological domain" description="Periplasmic" evidence="1">
    <location>
        <begin position="31"/>
        <end position="147"/>
    </location>
</feature>
<feature type="binding site" description="covalent" evidence="1">
    <location>
        <position position="123"/>
    </location>
    <ligand>
        <name>heme</name>
        <dbReference type="ChEBI" id="CHEBI:30413"/>
    </ligand>
</feature>
<feature type="binding site" description="axial binding residue" evidence="1">
    <location>
        <position position="127"/>
    </location>
    <ligand>
        <name>heme</name>
        <dbReference type="ChEBI" id="CHEBI:30413"/>
    </ligand>
    <ligandPart>
        <name>Fe</name>
        <dbReference type="ChEBI" id="CHEBI:18248"/>
    </ligandPart>
</feature>
<proteinExistence type="inferred from homology"/>
<organism>
    <name type="scientific">Ruegeria pomeroyi (strain ATCC 700808 / DSM 15171 / DSS-3)</name>
    <name type="common">Silicibacter pomeroyi</name>
    <dbReference type="NCBI Taxonomy" id="246200"/>
    <lineage>
        <taxon>Bacteria</taxon>
        <taxon>Pseudomonadati</taxon>
        <taxon>Pseudomonadota</taxon>
        <taxon>Alphaproteobacteria</taxon>
        <taxon>Rhodobacterales</taxon>
        <taxon>Roseobacteraceae</taxon>
        <taxon>Ruegeria</taxon>
    </lineage>
</organism>
<keyword id="KW-0997">Cell inner membrane</keyword>
<keyword id="KW-1003">Cell membrane</keyword>
<keyword id="KW-0201">Cytochrome c-type biogenesis</keyword>
<keyword id="KW-0349">Heme</keyword>
<keyword id="KW-0408">Iron</keyword>
<keyword id="KW-0472">Membrane</keyword>
<keyword id="KW-0479">Metal-binding</keyword>
<keyword id="KW-1185">Reference proteome</keyword>
<keyword id="KW-0735">Signal-anchor</keyword>
<keyword id="KW-0812">Transmembrane</keyword>
<keyword id="KW-1133">Transmembrane helix</keyword>
<dbReference type="EMBL" id="CP000031">
    <property type="protein sequence ID" value="AAV95156.1"/>
    <property type="molecule type" value="Genomic_DNA"/>
</dbReference>
<dbReference type="SMR" id="Q5LS91"/>
<dbReference type="STRING" id="246200.SPO1877"/>
<dbReference type="PaxDb" id="246200-SPO1877"/>
<dbReference type="KEGG" id="sil:SPO1877"/>
<dbReference type="eggNOG" id="COG2332">
    <property type="taxonomic scope" value="Bacteria"/>
</dbReference>
<dbReference type="HOGENOM" id="CLU_079503_1_1_5"/>
<dbReference type="OrthoDB" id="9793584at2"/>
<dbReference type="Proteomes" id="UP000001023">
    <property type="component" value="Chromosome"/>
</dbReference>
<dbReference type="GO" id="GO:0005886">
    <property type="term" value="C:plasma membrane"/>
    <property type="evidence" value="ECO:0007669"/>
    <property type="project" value="UniProtKB-SubCell"/>
</dbReference>
<dbReference type="GO" id="GO:0020037">
    <property type="term" value="F:heme binding"/>
    <property type="evidence" value="ECO:0007669"/>
    <property type="project" value="InterPro"/>
</dbReference>
<dbReference type="GO" id="GO:0046872">
    <property type="term" value="F:metal ion binding"/>
    <property type="evidence" value="ECO:0007669"/>
    <property type="project" value="UniProtKB-KW"/>
</dbReference>
<dbReference type="GO" id="GO:0017004">
    <property type="term" value="P:cytochrome complex assembly"/>
    <property type="evidence" value="ECO:0007669"/>
    <property type="project" value="UniProtKB-KW"/>
</dbReference>
<dbReference type="Gene3D" id="2.40.50.140">
    <property type="entry name" value="Nucleic acid-binding proteins"/>
    <property type="match status" value="1"/>
</dbReference>
<dbReference type="HAMAP" id="MF_01959">
    <property type="entry name" value="CcmE"/>
    <property type="match status" value="1"/>
</dbReference>
<dbReference type="InterPro" id="IPR004329">
    <property type="entry name" value="CcmE"/>
</dbReference>
<dbReference type="InterPro" id="IPR036127">
    <property type="entry name" value="CcmE-like_sf"/>
</dbReference>
<dbReference type="InterPro" id="IPR012340">
    <property type="entry name" value="NA-bd_OB-fold"/>
</dbReference>
<dbReference type="NCBIfam" id="NF009727">
    <property type="entry name" value="PRK13254.1-1"/>
    <property type="match status" value="1"/>
</dbReference>
<dbReference type="NCBIfam" id="NF009731">
    <property type="entry name" value="PRK13254.1-5"/>
    <property type="match status" value="1"/>
</dbReference>
<dbReference type="PANTHER" id="PTHR34128">
    <property type="entry name" value="CYTOCHROME C-TYPE BIOGENESIS PROTEIN CCME HOMOLOG, MITOCHONDRIAL"/>
    <property type="match status" value="1"/>
</dbReference>
<dbReference type="PANTHER" id="PTHR34128:SF2">
    <property type="entry name" value="CYTOCHROME C-TYPE BIOGENESIS PROTEIN CCME HOMOLOG, MITOCHONDRIAL"/>
    <property type="match status" value="1"/>
</dbReference>
<dbReference type="Pfam" id="PF03100">
    <property type="entry name" value="CcmE"/>
    <property type="match status" value="1"/>
</dbReference>
<dbReference type="SUPFAM" id="SSF82093">
    <property type="entry name" value="Heme chaperone CcmE"/>
    <property type="match status" value="1"/>
</dbReference>
<name>CCME1_RUEPO</name>